<feature type="chain" id="PRO_1000134075" description="Thiopurine S-methyltransferase">
    <location>
        <begin position="1"/>
        <end position="213"/>
    </location>
</feature>
<feature type="binding site" evidence="1">
    <location>
        <position position="10"/>
    </location>
    <ligand>
        <name>S-adenosyl-L-methionine</name>
        <dbReference type="ChEBI" id="CHEBI:59789"/>
    </ligand>
</feature>
<feature type="binding site" evidence="1">
    <location>
        <position position="45"/>
    </location>
    <ligand>
        <name>S-adenosyl-L-methionine</name>
        <dbReference type="ChEBI" id="CHEBI:59789"/>
    </ligand>
</feature>
<feature type="binding site" evidence="1">
    <location>
        <position position="66"/>
    </location>
    <ligand>
        <name>S-adenosyl-L-methionine</name>
        <dbReference type="ChEBI" id="CHEBI:59789"/>
    </ligand>
</feature>
<feature type="binding site" evidence="1">
    <location>
        <position position="121"/>
    </location>
    <ligand>
        <name>S-adenosyl-L-methionine</name>
        <dbReference type="ChEBI" id="CHEBI:59789"/>
    </ligand>
</feature>
<reference key="1">
    <citation type="journal article" date="2008" name="BMC Genomics">
        <title>The genome sequence of the fish pathogen Aliivibrio salmonicida strain LFI1238 shows extensive evidence of gene decay.</title>
        <authorList>
            <person name="Hjerde E."/>
            <person name="Lorentzen M.S."/>
            <person name="Holden M.T."/>
            <person name="Seeger K."/>
            <person name="Paulsen S."/>
            <person name="Bason N."/>
            <person name="Churcher C."/>
            <person name="Harris D."/>
            <person name="Norbertczak H."/>
            <person name="Quail M.A."/>
            <person name="Sanders S."/>
            <person name="Thurston S."/>
            <person name="Parkhill J."/>
            <person name="Willassen N.P."/>
            <person name="Thomson N.R."/>
        </authorList>
    </citation>
    <scope>NUCLEOTIDE SEQUENCE [LARGE SCALE GENOMIC DNA]</scope>
    <source>
        <strain>LFI1238</strain>
    </source>
</reference>
<name>TPMT_ALISL</name>
<sequence length="213" mass="24407">MDQEFWQKKWASNVIGFHLPDTNPVLSEFWKALNPTREQTVFVPLCGKSMDLDWLAERHNSVSGVELSQIAVRAFFAERLYTPTVTTLSSTLELYDFDEFTIFAGDYFTAPIEATDLIYDRAALVALPKEMRSEYVQVLRSRLKEGGRILLVTLDYDQNEMSGPPFSVPEDEVRSLFSGMSITKLQRDEADADHPRIKKGLTRFAEEVWLIKS</sequence>
<comment type="catalytic activity">
    <reaction evidence="1">
        <text>S-adenosyl-L-methionine + a thiopurine = S-adenosyl-L-homocysteine + a thiopurine S-methylether.</text>
        <dbReference type="EC" id="2.1.1.67"/>
    </reaction>
</comment>
<comment type="subcellular location">
    <subcellularLocation>
        <location evidence="1">Cytoplasm</location>
    </subcellularLocation>
</comment>
<comment type="similarity">
    <text evidence="1">Belongs to the class I-like SAM-binding methyltransferase superfamily. TPMT family.</text>
</comment>
<accession>B6ENK8</accession>
<dbReference type="EC" id="2.1.1.67" evidence="1"/>
<dbReference type="EMBL" id="FM178379">
    <property type="protein sequence ID" value="CAQ79499.1"/>
    <property type="molecule type" value="Genomic_DNA"/>
</dbReference>
<dbReference type="RefSeq" id="WP_012550396.1">
    <property type="nucleotide sequence ID" value="NC_011312.1"/>
</dbReference>
<dbReference type="SMR" id="B6ENK8"/>
<dbReference type="KEGG" id="vsa:VSAL_I1814"/>
<dbReference type="eggNOG" id="COG0500">
    <property type="taxonomic scope" value="Bacteria"/>
</dbReference>
<dbReference type="HOGENOM" id="CLU_085515_1_0_6"/>
<dbReference type="Proteomes" id="UP000001730">
    <property type="component" value="Chromosome 1"/>
</dbReference>
<dbReference type="GO" id="GO:0005737">
    <property type="term" value="C:cytoplasm"/>
    <property type="evidence" value="ECO:0007669"/>
    <property type="project" value="UniProtKB-SubCell"/>
</dbReference>
<dbReference type="GO" id="GO:0008119">
    <property type="term" value="F:thiopurine S-methyltransferase activity"/>
    <property type="evidence" value="ECO:0007669"/>
    <property type="project" value="UniProtKB-UniRule"/>
</dbReference>
<dbReference type="GO" id="GO:0032259">
    <property type="term" value="P:methylation"/>
    <property type="evidence" value="ECO:0007669"/>
    <property type="project" value="UniProtKB-KW"/>
</dbReference>
<dbReference type="GO" id="GO:0010038">
    <property type="term" value="P:response to metal ion"/>
    <property type="evidence" value="ECO:0007669"/>
    <property type="project" value="InterPro"/>
</dbReference>
<dbReference type="FunFam" id="3.40.50.150:FF:000101">
    <property type="entry name" value="Thiopurine S-methyltransferase"/>
    <property type="match status" value="1"/>
</dbReference>
<dbReference type="Gene3D" id="3.40.50.150">
    <property type="entry name" value="Vaccinia Virus protein VP39"/>
    <property type="match status" value="1"/>
</dbReference>
<dbReference type="HAMAP" id="MF_00812">
    <property type="entry name" value="Thiopur_methtran"/>
    <property type="match status" value="1"/>
</dbReference>
<dbReference type="InterPro" id="IPR029063">
    <property type="entry name" value="SAM-dependent_MTases_sf"/>
</dbReference>
<dbReference type="InterPro" id="IPR022474">
    <property type="entry name" value="Thiopur_S-MeTfrase_Se/Te_detox"/>
</dbReference>
<dbReference type="InterPro" id="IPR025835">
    <property type="entry name" value="Thiopurine_S-MeTrfase"/>
</dbReference>
<dbReference type="InterPro" id="IPR008854">
    <property type="entry name" value="TPMT"/>
</dbReference>
<dbReference type="NCBIfam" id="NF009732">
    <property type="entry name" value="PRK13255.1"/>
    <property type="match status" value="1"/>
</dbReference>
<dbReference type="NCBIfam" id="TIGR03840">
    <property type="entry name" value="TMPT_Se_Te"/>
    <property type="match status" value="1"/>
</dbReference>
<dbReference type="PANTHER" id="PTHR10259">
    <property type="entry name" value="THIOPURINE S-METHYLTRANSFERASE"/>
    <property type="match status" value="1"/>
</dbReference>
<dbReference type="PANTHER" id="PTHR10259:SF11">
    <property type="entry name" value="THIOPURINE S-METHYLTRANSFERASE"/>
    <property type="match status" value="1"/>
</dbReference>
<dbReference type="Pfam" id="PF05724">
    <property type="entry name" value="TPMT"/>
    <property type="match status" value="1"/>
</dbReference>
<dbReference type="PIRSF" id="PIRSF023956">
    <property type="entry name" value="Thiopurine_S-methyltransferase"/>
    <property type="match status" value="1"/>
</dbReference>
<dbReference type="SUPFAM" id="SSF53335">
    <property type="entry name" value="S-adenosyl-L-methionine-dependent methyltransferases"/>
    <property type="match status" value="1"/>
</dbReference>
<dbReference type="PROSITE" id="PS51585">
    <property type="entry name" value="SAM_MT_TPMT"/>
    <property type="match status" value="1"/>
</dbReference>
<keyword id="KW-0963">Cytoplasm</keyword>
<keyword id="KW-0489">Methyltransferase</keyword>
<keyword id="KW-0949">S-adenosyl-L-methionine</keyword>
<keyword id="KW-0808">Transferase</keyword>
<organism>
    <name type="scientific">Aliivibrio salmonicida (strain LFI1238)</name>
    <name type="common">Vibrio salmonicida (strain LFI1238)</name>
    <dbReference type="NCBI Taxonomy" id="316275"/>
    <lineage>
        <taxon>Bacteria</taxon>
        <taxon>Pseudomonadati</taxon>
        <taxon>Pseudomonadota</taxon>
        <taxon>Gammaproteobacteria</taxon>
        <taxon>Vibrionales</taxon>
        <taxon>Vibrionaceae</taxon>
        <taxon>Aliivibrio</taxon>
    </lineage>
</organism>
<protein>
    <recommendedName>
        <fullName evidence="1">Thiopurine S-methyltransferase</fullName>
        <ecNumber evidence="1">2.1.1.67</ecNumber>
    </recommendedName>
    <alternativeName>
        <fullName evidence="1">Thiopurine methyltransferase</fullName>
    </alternativeName>
</protein>
<gene>
    <name evidence="1" type="primary">tpm</name>
    <name type="ordered locus">VSAL_I1814</name>
</gene>
<evidence type="ECO:0000255" key="1">
    <source>
        <dbReference type="HAMAP-Rule" id="MF_00812"/>
    </source>
</evidence>
<proteinExistence type="inferred from homology"/>